<feature type="chain" id="PRO_0000267726" description="3-hydroxydecanoyl-[acyl-carrier-protein] dehydratase">
    <location>
        <begin position="1"/>
        <end position="171"/>
    </location>
</feature>
<feature type="active site" evidence="1">
    <location>
        <position position="70"/>
    </location>
</feature>
<protein>
    <recommendedName>
        <fullName evidence="1">3-hydroxydecanoyl-[acyl-carrier-protein] dehydratase</fullName>
        <ecNumber evidence="1">4.2.1.59</ecNumber>
    </recommendedName>
    <alternativeName>
        <fullName evidence="1">3-hydroxyacyl-[acyl-carrier-protein] dehydratase FabA</fullName>
    </alternativeName>
    <alternativeName>
        <fullName evidence="1">Beta-hydroxydecanoyl thioester dehydrase</fullName>
    </alternativeName>
    <alternativeName>
        <fullName evidence="1">Trans-2-decenoyl-[acyl-carrier-protein] isomerase</fullName>
        <ecNumber evidence="1">5.3.3.14</ecNumber>
    </alternativeName>
</protein>
<gene>
    <name evidence="1" type="primary">fabA</name>
    <name type="ordered locus">CPS_3274</name>
</gene>
<name>FABA_COLP3</name>
<dbReference type="EC" id="4.2.1.59" evidence="1"/>
<dbReference type="EC" id="5.3.3.14" evidence="1"/>
<dbReference type="EMBL" id="CP000083">
    <property type="protein sequence ID" value="AAZ26838.1"/>
    <property type="molecule type" value="Genomic_DNA"/>
</dbReference>
<dbReference type="RefSeq" id="WP_011044043.1">
    <property type="nucleotide sequence ID" value="NC_003910.7"/>
</dbReference>
<dbReference type="SMR" id="Q47Z14"/>
<dbReference type="STRING" id="167879.CPS_3274"/>
<dbReference type="KEGG" id="cps:CPS_3274"/>
<dbReference type="eggNOG" id="COG0764">
    <property type="taxonomic scope" value="Bacteria"/>
</dbReference>
<dbReference type="HOGENOM" id="CLU_097925_0_0_6"/>
<dbReference type="UniPathway" id="UPA00094"/>
<dbReference type="Proteomes" id="UP000000547">
    <property type="component" value="Chromosome"/>
</dbReference>
<dbReference type="GO" id="GO:0005737">
    <property type="term" value="C:cytoplasm"/>
    <property type="evidence" value="ECO:0007669"/>
    <property type="project" value="UniProtKB-SubCell"/>
</dbReference>
<dbReference type="GO" id="GO:0019171">
    <property type="term" value="F:(3R)-hydroxyacyl-[acyl-carrier-protein] dehydratase activity"/>
    <property type="evidence" value="ECO:0007669"/>
    <property type="project" value="UniProtKB-UniRule"/>
</dbReference>
<dbReference type="GO" id="GO:0034017">
    <property type="term" value="F:trans-2-decenoyl-acyl-carrier-protein isomerase activity"/>
    <property type="evidence" value="ECO:0007669"/>
    <property type="project" value="UniProtKB-UniRule"/>
</dbReference>
<dbReference type="GO" id="GO:0006636">
    <property type="term" value="P:unsaturated fatty acid biosynthetic process"/>
    <property type="evidence" value="ECO:0007669"/>
    <property type="project" value="UniProtKB-UniRule"/>
</dbReference>
<dbReference type="CDD" id="cd01287">
    <property type="entry name" value="FabA"/>
    <property type="match status" value="1"/>
</dbReference>
<dbReference type="Gene3D" id="3.10.129.10">
    <property type="entry name" value="Hotdog Thioesterase"/>
    <property type="match status" value="1"/>
</dbReference>
<dbReference type="HAMAP" id="MF_00405">
    <property type="entry name" value="FabA"/>
    <property type="match status" value="1"/>
</dbReference>
<dbReference type="InterPro" id="IPR010083">
    <property type="entry name" value="FabA"/>
</dbReference>
<dbReference type="InterPro" id="IPR013114">
    <property type="entry name" value="FabA_FabZ"/>
</dbReference>
<dbReference type="InterPro" id="IPR029069">
    <property type="entry name" value="HotDog_dom_sf"/>
</dbReference>
<dbReference type="NCBIfam" id="TIGR01749">
    <property type="entry name" value="fabA"/>
    <property type="match status" value="1"/>
</dbReference>
<dbReference type="NCBIfam" id="NF003509">
    <property type="entry name" value="PRK05174.1"/>
    <property type="match status" value="1"/>
</dbReference>
<dbReference type="PANTHER" id="PTHR30272">
    <property type="entry name" value="3-HYDROXYACYL-[ACYL-CARRIER-PROTEIN] DEHYDRATASE"/>
    <property type="match status" value="1"/>
</dbReference>
<dbReference type="PANTHER" id="PTHR30272:SF8">
    <property type="entry name" value="3-HYDROXYDECANOYL-[ACYL-CARRIER-PROTEIN] DEHYDRATASE"/>
    <property type="match status" value="1"/>
</dbReference>
<dbReference type="Pfam" id="PF07977">
    <property type="entry name" value="FabA"/>
    <property type="match status" value="1"/>
</dbReference>
<dbReference type="SUPFAM" id="SSF54637">
    <property type="entry name" value="Thioesterase/thiol ester dehydrase-isomerase"/>
    <property type="match status" value="1"/>
</dbReference>
<comment type="function">
    <text evidence="1">Necessary for the introduction of cis unsaturation into fatty acids. Catalyzes the dehydration of (3R)-3-hydroxydecanoyl-ACP to E-(2)-decenoyl-ACP and then its isomerization to Z-(3)-decenoyl-ACP. Can catalyze the dehydratase reaction for beta-hydroxyacyl-ACPs with saturated chain lengths up to 16:0, being most active on intermediate chain length.</text>
</comment>
<comment type="catalytic activity">
    <reaction evidence="1">
        <text>a (3R)-hydroxyacyl-[ACP] = a (2E)-enoyl-[ACP] + H2O</text>
        <dbReference type="Rhea" id="RHEA:13097"/>
        <dbReference type="Rhea" id="RHEA-COMP:9925"/>
        <dbReference type="Rhea" id="RHEA-COMP:9945"/>
        <dbReference type="ChEBI" id="CHEBI:15377"/>
        <dbReference type="ChEBI" id="CHEBI:78784"/>
        <dbReference type="ChEBI" id="CHEBI:78827"/>
        <dbReference type="EC" id="4.2.1.59"/>
    </reaction>
</comment>
<comment type="catalytic activity">
    <reaction evidence="1">
        <text>(3R)-hydroxydecanoyl-[ACP] = (2E)-decenoyl-[ACP] + H2O</text>
        <dbReference type="Rhea" id="RHEA:41860"/>
        <dbReference type="Rhea" id="RHEA-COMP:9638"/>
        <dbReference type="Rhea" id="RHEA-COMP:9639"/>
        <dbReference type="ChEBI" id="CHEBI:15377"/>
        <dbReference type="ChEBI" id="CHEBI:78466"/>
        <dbReference type="ChEBI" id="CHEBI:78467"/>
    </reaction>
</comment>
<comment type="catalytic activity">
    <reaction evidence="1">
        <text>(2E)-decenoyl-[ACP] = (3Z)-decenoyl-[ACP]</text>
        <dbReference type="Rhea" id="RHEA:23568"/>
        <dbReference type="Rhea" id="RHEA-COMP:9639"/>
        <dbReference type="Rhea" id="RHEA-COMP:9927"/>
        <dbReference type="ChEBI" id="CHEBI:78467"/>
        <dbReference type="ChEBI" id="CHEBI:78798"/>
        <dbReference type="EC" id="5.3.3.14"/>
    </reaction>
</comment>
<comment type="pathway">
    <text evidence="1">Lipid metabolism; fatty acid biosynthesis.</text>
</comment>
<comment type="subunit">
    <text evidence="1">Homodimer.</text>
</comment>
<comment type="subcellular location">
    <subcellularLocation>
        <location evidence="1">Cytoplasm</location>
    </subcellularLocation>
</comment>
<comment type="similarity">
    <text evidence="1">Belongs to the thioester dehydratase family. FabA subfamily.</text>
</comment>
<proteinExistence type="inferred from homology"/>
<sequence length="171" mass="18755">MPQQNSYSKEDLVKAGTGELFGEGNSQLPSDNMLMMDRIITISEEGGENGKGFILAELDITPDLWFFDCHFKGDPVMPGCLGLDAMWQLVGFFLAWTGGPGKGRALGVGEVKFTGQILPTAKKVTFKIDFKRVIKRKLYMGLADGSVSVDGREIYTAKDLKVGLFTDTSKF</sequence>
<evidence type="ECO:0000255" key="1">
    <source>
        <dbReference type="HAMAP-Rule" id="MF_00405"/>
    </source>
</evidence>
<organism>
    <name type="scientific">Colwellia psychrerythraea (strain 34H / ATCC BAA-681)</name>
    <name type="common">Vibrio psychroerythus</name>
    <dbReference type="NCBI Taxonomy" id="167879"/>
    <lineage>
        <taxon>Bacteria</taxon>
        <taxon>Pseudomonadati</taxon>
        <taxon>Pseudomonadota</taxon>
        <taxon>Gammaproteobacteria</taxon>
        <taxon>Alteromonadales</taxon>
        <taxon>Colwelliaceae</taxon>
        <taxon>Colwellia</taxon>
    </lineage>
</organism>
<keyword id="KW-0963">Cytoplasm</keyword>
<keyword id="KW-0275">Fatty acid biosynthesis</keyword>
<keyword id="KW-0276">Fatty acid metabolism</keyword>
<keyword id="KW-0413">Isomerase</keyword>
<keyword id="KW-0444">Lipid biosynthesis</keyword>
<keyword id="KW-0443">Lipid metabolism</keyword>
<keyword id="KW-0456">Lyase</keyword>
<accession>Q47Z14</accession>
<reference key="1">
    <citation type="journal article" date="2005" name="Proc. Natl. Acad. Sci. U.S.A.">
        <title>The psychrophilic lifestyle as revealed by the genome sequence of Colwellia psychrerythraea 34H through genomic and proteomic analyses.</title>
        <authorList>
            <person name="Methe B.A."/>
            <person name="Nelson K.E."/>
            <person name="Deming J.W."/>
            <person name="Momen B."/>
            <person name="Melamud E."/>
            <person name="Zhang X."/>
            <person name="Moult J."/>
            <person name="Madupu R."/>
            <person name="Nelson W.C."/>
            <person name="Dodson R.J."/>
            <person name="Brinkac L.M."/>
            <person name="Daugherty S.C."/>
            <person name="Durkin A.S."/>
            <person name="DeBoy R.T."/>
            <person name="Kolonay J.F."/>
            <person name="Sullivan S.A."/>
            <person name="Zhou L."/>
            <person name="Davidsen T.M."/>
            <person name="Wu M."/>
            <person name="Huston A.L."/>
            <person name="Lewis M."/>
            <person name="Weaver B."/>
            <person name="Weidman J.F."/>
            <person name="Khouri H."/>
            <person name="Utterback T.R."/>
            <person name="Feldblyum T.V."/>
            <person name="Fraser C.M."/>
        </authorList>
    </citation>
    <scope>NUCLEOTIDE SEQUENCE [LARGE SCALE GENOMIC DNA]</scope>
    <source>
        <strain>34H / ATCC BAA-681</strain>
    </source>
</reference>